<comment type="function">
    <text>Cytochromes P450 are a group of heme-thiolate monooxygenases. In liver microsomes, this enzyme is involved in an NADPH-dependent electron transport pathway. It oxidizes a variety of structurally unrelated compounds, including steroids, fatty acids, and xenobiotics.</text>
</comment>
<comment type="catalytic activity">
    <reaction>
        <text>an organic molecule + reduced [NADPH--hemoprotein reductase] + O2 = an alcohol + oxidized [NADPH--hemoprotein reductase] + H2O + H(+)</text>
        <dbReference type="Rhea" id="RHEA:17149"/>
        <dbReference type="Rhea" id="RHEA-COMP:11964"/>
        <dbReference type="Rhea" id="RHEA-COMP:11965"/>
        <dbReference type="ChEBI" id="CHEBI:15377"/>
        <dbReference type="ChEBI" id="CHEBI:15378"/>
        <dbReference type="ChEBI" id="CHEBI:15379"/>
        <dbReference type="ChEBI" id="CHEBI:30879"/>
        <dbReference type="ChEBI" id="CHEBI:57618"/>
        <dbReference type="ChEBI" id="CHEBI:58210"/>
        <dbReference type="ChEBI" id="CHEBI:142491"/>
        <dbReference type="EC" id="1.14.14.1"/>
    </reaction>
</comment>
<comment type="cofactor">
    <cofactor evidence="1">
        <name>heme</name>
        <dbReference type="ChEBI" id="CHEBI:30413"/>
    </cofactor>
</comment>
<comment type="subcellular location">
    <subcellularLocation>
        <location>Endoplasmic reticulum membrane</location>
        <topology>Peripheral membrane protein</topology>
    </subcellularLocation>
    <subcellularLocation>
        <location>Microsome membrane</location>
        <topology>Peripheral membrane protein</topology>
    </subcellularLocation>
</comment>
<comment type="induction">
    <text>P450 can be induced to high levels in liver and other tissues by various foreign compounds, including drugs, pesticides, and carcinogens.</text>
</comment>
<comment type="similarity">
    <text evidence="2">Belongs to the cytochrome P450 family.</text>
</comment>
<reference key="1">
    <citation type="journal article" date="1997" name="Environ. Toxicol. Pharmacol.">
        <title>Isolation of a bovine full length cytochrome P450 (CYP3A) cDNA sequence and its functional expression in V79 cells.</title>
        <authorList>
            <person name="Natsuhori M."/>
            <person name="van Raak M."/>
            <person name="Ligtenberg M."/>
            <person name="Kleij L."/>
            <person name="ten Berge D."/>
            <person name="Zweers-Zeilmaker W.M."/>
            <person name="de Groene E.M."/>
            <person name="van Miert A.S.J.P.A."/>
            <person name="Witkamp R.F."/>
            <person name="Horbach G.J.M.J."/>
        </authorList>
    </citation>
    <scope>NUCLEOTIDE SEQUENCE [MRNA]</scope>
    <source>
        <strain>Hereford</strain>
        <tissue>Liver</tissue>
    </source>
</reference>
<keyword id="KW-0256">Endoplasmic reticulum</keyword>
<keyword id="KW-0349">Heme</keyword>
<keyword id="KW-0408">Iron</keyword>
<keyword id="KW-0472">Membrane</keyword>
<keyword id="KW-0479">Metal-binding</keyword>
<keyword id="KW-0492">Microsome</keyword>
<keyword id="KW-0503">Monooxygenase</keyword>
<keyword id="KW-0560">Oxidoreductase</keyword>
<keyword id="KW-1185">Reference proteome</keyword>
<evidence type="ECO:0000250" key="1"/>
<evidence type="ECO:0000305" key="2"/>
<protein>
    <recommendedName>
        <fullName>Cytochrome P450 3A28</fullName>
        <ecNumber>1.14.14.1</ecNumber>
    </recommendedName>
    <alternativeName>
        <fullName>CYPIIIA28</fullName>
    </alternativeName>
</protein>
<proteinExistence type="evidence at transcript level"/>
<organism>
    <name type="scientific">Bos taurus</name>
    <name type="common">Bovine</name>
    <dbReference type="NCBI Taxonomy" id="9913"/>
    <lineage>
        <taxon>Eukaryota</taxon>
        <taxon>Metazoa</taxon>
        <taxon>Chordata</taxon>
        <taxon>Craniata</taxon>
        <taxon>Vertebrata</taxon>
        <taxon>Euteleostomi</taxon>
        <taxon>Mammalia</taxon>
        <taxon>Eutheria</taxon>
        <taxon>Laurasiatheria</taxon>
        <taxon>Artiodactyla</taxon>
        <taxon>Ruminantia</taxon>
        <taxon>Pecora</taxon>
        <taxon>Bovidae</taxon>
        <taxon>Bovinae</taxon>
        <taxon>Bos</taxon>
    </lineage>
</organism>
<feature type="chain" id="PRO_0000051807" description="Cytochrome P450 3A28">
    <location>
        <begin position="1"/>
        <end position="507"/>
    </location>
</feature>
<feature type="binding site" description="axial binding residue" evidence="1">
    <location>
        <position position="442"/>
    </location>
    <ligand>
        <name>heme</name>
        <dbReference type="ChEBI" id="CHEBI:30413"/>
    </ligand>
    <ligandPart>
        <name>Fe</name>
        <dbReference type="ChEBI" id="CHEBI:18248"/>
    </ligandPart>
</feature>
<name>CP3AS_BOVIN</name>
<gene>
    <name type="primary">CYP3A28</name>
</gene>
<accession>P79102</accession>
<dbReference type="EC" id="1.14.14.1"/>
<dbReference type="EMBL" id="Y10214">
    <property type="protein sequence ID" value="CAA71266.1"/>
    <property type="molecule type" value="mRNA"/>
</dbReference>
<dbReference type="SMR" id="P79102"/>
<dbReference type="FunCoup" id="P79102">
    <property type="interactions" value="227"/>
</dbReference>
<dbReference type="STRING" id="9913.ENSBTAP00000016177"/>
<dbReference type="PaxDb" id="9913-ENSBTAP00000016177"/>
<dbReference type="PeptideAtlas" id="P79102"/>
<dbReference type="eggNOG" id="KOG0158">
    <property type="taxonomic scope" value="Eukaryota"/>
</dbReference>
<dbReference type="InParanoid" id="P79102"/>
<dbReference type="Proteomes" id="UP000009136">
    <property type="component" value="Unplaced"/>
</dbReference>
<dbReference type="GO" id="GO:0005789">
    <property type="term" value="C:endoplasmic reticulum membrane"/>
    <property type="evidence" value="ECO:0007669"/>
    <property type="project" value="UniProtKB-SubCell"/>
</dbReference>
<dbReference type="GO" id="GO:0020037">
    <property type="term" value="F:heme binding"/>
    <property type="evidence" value="ECO:0007669"/>
    <property type="project" value="InterPro"/>
</dbReference>
<dbReference type="GO" id="GO:0005506">
    <property type="term" value="F:iron ion binding"/>
    <property type="evidence" value="ECO:0007669"/>
    <property type="project" value="InterPro"/>
</dbReference>
<dbReference type="GO" id="GO:0016712">
    <property type="term" value="F:oxidoreductase activity, acting on paired donors, with incorporation or reduction of molecular oxygen, reduced flavin or flavoprotein as one donor, and incorporation of one atom of oxygen"/>
    <property type="evidence" value="ECO:0007669"/>
    <property type="project" value="UniProtKB-EC"/>
</dbReference>
<dbReference type="GO" id="GO:0050649">
    <property type="term" value="F:testosterone 6-beta-hydroxylase activity"/>
    <property type="evidence" value="ECO:0000318"/>
    <property type="project" value="GO_Central"/>
</dbReference>
<dbReference type="GO" id="GO:0070989">
    <property type="term" value="P:oxidative demethylation"/>
    <property type="evidence" value="ECO:0000318"/>
    <property type="project" value="GO_Central"/>
</dbReference>
<dbReference type="GO" id="GO:0008202">
    <property type="term" value="P:steroid metabolic process"/>
    <property type="evidence" value="ECO:0000318"/>
    <property type="project" value="GO_Central"/>
</dbReference>
<dbReference type="CDD" id="cd20650">
    <property type="entry name" value="CYP3A"/>
    <property type="match status" value="1"/>
</dbReference>
<dbReference type="FunFam" id="1.10.630.10:FF:000096">
    <property type="entry name" value="Cytochrome P450 3A4"/>
    <property type="match status" value="1"/>
</dbReference>
<dbReference type="Gene3D" id="1.10.630.10">
    <property type="entry name" value="Cytochrome P450"/>
    <property type="match status" value="1"/>
</dbReference>
<dbReference type="InterPro" id="IPR001128">
    <property type="entry name" value="Cyt_P450"/>
</dbReference>
<dbReference type="InterPro" id="IPR017972">
    <property type="entry name" value="Cyt_P450_CS"/>
</dbReference>
<dbReference type="InterPro" id="IPR008072">
    <property type="entry name" value="Cyt_P450_E_CYP3A"/>
</dbReference>
<dbReference type="InterPro" id="IPR002402">
    <property type="entry name" value="Cyt_P450_E_grp-II"/>
</dbReference>
<dbReference type="InterPro" id="IPR036396">
    <property type="entry name" value="Cyt_P450_sf"/>
</dbReference>
<dbReference type="InterPro" id="IPR050705">
    <property type="entry name" value="Cytochrome_P450_3A"/>
</dbReference>
<dbReference type="PANTHER" id="PTHR24302:SF38">
    <property type="entry name" value="CYTOCHROME P450 3A5"/>
    <property type="match status" value="1"/>
</dbReference>
<dbReference type="PANTHER" id="PTHR24302">
    <property type="entry name" value="CYTOCHROME P450 FAMILY 3"/>
    <property type="match status" value="1"/>
</dbReference>
<dbReference type="Pfam" id="PF00067">
    <property type="entry name" value="p450"/>
    <property type="match status" value="1"/>
</dbReference>
<dbReference type="PRINTS" id="PR00464">
    <property type="entry name" value="EP450II"/>
</dbReference>
<dbReference type="PRINTS" id="PR01689">
    <property type="entry name" value="EP450IICYP3A"/>
</dbReference>
<dbReference type="PRINTS" id="PR00385">
    <property type="entry name" value="P450"/>
</dbReference>
<dbReference type="SUPFAM" id="SSF48264">
    <property type="entry name" value="Cytochrome P450"/>
    <property type="match status" value="1"/>
</dbReference>
<dbReference type="PROSITE" id="PS00086">
    <property type="entry name" value="CYTOCHROME_P450"/>
    <property type="match status" value="1"/>
</dbReference>
<sequence>MELIPSFSMETWVLLATSLVLLYIYGTYSYGLFKKLGIPGPRPVPYFGSTMAYHKGIPEFDNQCFKKYGKMWGFYEGRQPMLAITDPDIIKTVLVKECYSVFTNRRIFGPMGIMKYAISLAWDEQWKRIRTLLSPAFTSGKLKEMFPIIGQYGDMLVRNLRKEAEKGNPVNMKDMFGAYSMDVITGTAFGVNIDSLNNPHDPFVEHSKNLLRFRPFDPFILSIILFPFLNPVFEILNITLFPKSTVDFFTKSVKKIKESRLTDKQMNRVDLLQLMINSQNSKEIDNHKALSDIELVAQSTIFIFGGYETTSSTLSFIIYELTTHPHVQQKLQEEIDATFPNKAPPTYDALVQMEYLDMVVNETLRMFPIAGRLERVCKKDVEIHGVTIPKGTTVLVPLFVLHNNPELWPEPEEFRPERFSKNNKDSINPYVYLPFGTGPRNCLGMRFAIMNIKLALVRILQNFSFKPCKETQIPLKLYTQGLTQPEQPVILKVVPRGLGPQVEPDFL</sequence>